<gene>
    <name type="ordered locus">MK0400</name>
</gene>
<proteinExistence type="inferred from homology"/>
<accession>P58832</accession>
<feature type="chain" id="PRO_0000094526" description="UPF0200 protein MK0400">
    <location>
        <begin position="1"/>
        <end position="196"/>
    </location>
</feature>
<feature type="binding site" evidence="1">
    <location>
        <begin position="7"/>
        <end position="14"/>
    </location>
    <ligand>
        <name>ATP</name>
        <dbReference type="ChEBI" id="CHEBI:30616"/>
    </ligand>
</feature>
<name>Y400_METKA</name>
<reference key="1">
    <citation type="journal article" date="2002" name="Proc. Natl. Acad. Sci. U.S.A.">
        <title>The complete genome of hyperthermophile Methanopyrus kandleri AV19 and monophyly of archaeal methanogens.</title>
        <authorList>
            <person name="Slesarev A.I."/>
            <person name="Mezhevaya K.V."/>
            <person name="Makarova K.S."/>
            <person name="Polushin N.N."/>
            <person name="Shcherbinina O.V."/>
            <person name="Shakhova V.V."/>
            <person name="Belova G.I."/>
            <person name="Aravind L."/>
            <person name="Natale D.A."/>
            <person name="Rogozin I.B."/>
            <person name="Tatusov R.L."/>
            <person name="Wolf Y.I."/>
            <person name="Stetter K.O."/>
            <person name="Malykh A.G."/>
            <person name="Koonin E.V."/>
            <person name="Kozyavkin S.A."/>
        </authorList>
    </citation>
    <scope>NUCLEOTIDE SEQUENCE [LARGE SCALE GENOMIC DNA]</scope>
    <source>
        <strain>AV19 / DSM 6324 / JCM 9639 / NBRC 100938</strain>
    </source>
</reference>
<comment type="similarity">
    <text evidence="1">Belongs to the UPF0200 family.</text>
</comment>
<dbReference type="EMBL" id="AE009439">
    <property type="protein sequence ID" value="AAM01615.1"/>
    <property type="molecule type" value="Genomic_DNA"/>
</dbReference>
<dbReference type="RefSeq" id="WP_011018770.1">
    <property type="nucleotide sequence ID" value="NC_003551.1"/>
</dbReference>
<dbReference type="SMR" id="P58832"/>
<dbReference type="STRING" id="190192.MK0400"/>
<dbReference type="PaxDb" id="190192-MK0400"/>
<dbReference type="EnsemblBacteria" id="AAM01615">
    <property type="protein sequence ID" value="AAM01615"/>
    <property type="gene ID" value="MK0400"/>
</dbReference>
<dbReference type="GeneID" id="1477703"/>
<dbReference type="KEGG" id="mka:MK0400"/>
<dbReference type="PATRIC" id="fig|190192.8.peg.427"/>
<dbReference type="HOGENOM" id="CLU_096329_1_0_2"/>
<dbReference type="InParanoid" id="P58832"/>
<dbReference type="OrthoDB" id="85381at2157"/>
<dbReference type="Proteomes" id="UP000001826">
    <property type="component" value="Chromosome"/>
</dbReference>
<dbReference type="GO" id="GO:0005524">
    <property type="term" value="F:ATP binding"/>
    <property type="evidence" value="ECO:0007669"/>
    <property type="project" value="UniProtKB-UniRule"/>
</dbReference>
<dbReference type="Gene3D" id="3.40.50.300">
    <property type="entry name" value="P-loop containing nucleotide triphosphate hydrolases"/>
    <property type="match status" value="1"/>
</dbReference>
<dbReference type="HAMAP" id="MF_01111">
    <property type="entry name" value="UPF0200"/>
    <property type="match status" value="1"/>
</dbReference>
<dbReference type="InterPro" id="IPR022970">
    <property type="entry name" value="NTP_hydrolase-rel"/>
</dbReference>
<dbReference type="InterPro" id="IPR027417">
    <property type="entry name" value="P-loop_NTPase"/>
</dbReference>
<dbReference type="PANTHER" id="PTHR41930:SF1">
    <property type="entry name" value="DEPHOSPHO-COA KINASE"/>
    <property type="match status" value="1"/>
</dbReference>
<dbReference type="PANTHER" id="PTHR41930">
    <property type="entry name" value="UPF0200 PROTEIN MJ1399"/>
    <property type="match status" value="1"/>
</dbReference>
<dbReference type="Pfam" id="PF13207">
    <property type="entry name" value="AAA_17"/>
    <property type="match status" value="1"/>
</dbReference>
<dbReference type="SUPFAM" id="SSF52540">
    <property type="entry name" value="P-loop containing nucleoside triphosphate hydrolases"/>
    <property type="match status" value="1"/>
</dbReference>
<evidence type="ECO:0000255" key="1">
    <source>
        <dbReference type="HAMAP-Rule" id="MF_01111"/>
    </source>
</evidence>
<keyword id="KW-0067">ATP-binding</keyword>
<keyword id="KW-0547">Nucleotide-binding</keyword>
<keyword id="KW-1185">Reference proteome</keyword>
<protein>
    <recommendedName>
        <fullName evidence="1">UPF0200 protein MK0400</fullName>
    </recommendedName>
</protein>
<sequence length="196" mass="22385">MLICVVGMPGAGKGEFVKVAREEGIPVVVMGDAVRREAERRGMDVGEMAKRLREERGMDAVARLVEEDVERELRRAGVVVIDGIRNPEELEYFRDRFGERSVIVVAIHASPQTRFERLRIRGREDDPDTKREFEERDERELGFGIGDVISRADVMIVNERVSLPEFREKCRMVIRAILRGDPDDLPGGFDHLRVPD</sequence>
<organism>
    <name type="scientific">Methanopyrus kandleri (strain AV19 / DSM 6324 / JCM 9639 / NBRC 100938)</name>
    <dbReference type="NCBI Taxonomy" id="190192"/>
    <lineage>
        <taxon>Archaea</taxon>
        <taxon>Methanobacteriati</taxon>
        <taxon>Methanobacteriota</taxon>
        <taxon>Methanomada group</taxon>
        <taxon>Methanopyri</taxon>
        <taxon>Methanopyrales</taxon>
        <taxon>Methanopyraceae</taxon>
        <taxon>Methanopyrus</taxon>
    </lineage>
</organism>